<sequence>MAGNTFGRALRLTTFGESHGPGLGGIIDGCPAGLELTEAHIQAELDRRKPGQGPTATKRKEADTVRLLSGVFEGCTTGTPIAFFIANEDQRSRDYGNLAEAFRPGHADWAYFQKYNGLRDHRGGGRSSGRETAARVAGGVIAKKILARRGVTILGGCVELGGIAAPLWGLDMDGAAARPYCAAAPSVVSQWDALVAEARKAGETLGGIVRIEAHNVPAGLGEPVFDKLDAVLAHAVMSVGAVKGVEVGEGFAAAALRGSQNNDPLLPADAPEPGRARFASNHAGGILGGISSGQDIVLRVAVKPIASIAVTQKTVDRQGQPVDILIGGRHDLSAIPRIVPVLEAMTALALADALLLQQRMGLGL</sequence>
<name>AROC_DESDA</name>
<protein>
    <recommendedName>
        <fullName evidence="1">Chorismate synthase</fullName>
        <shortName evidence="1">CS</shortName>
        <ecNumber evidence="1">4.2.3.5</ecNumber>
    </recommendedName>
    <alternativeName>
        <fullName evidence="1">5-enolpyruvylshikimate-3-phosphate phospholyase</fullName>
    </alternativeName>
</protein>
<keyword id="KW-0028">Amino-acid biosynthesis</keyword>
<keyword id="KW-0057">Aromatic amino acid biosynthesis</keyword>
<keyword id="KW-0274">FAD</keyword>
<keyword id="KW-0285">Flavoprotein</keyword>
<keyword id="KW-0288">FMN</keyword>
<keyword id="KW-0456">Lyase</keyword>
<keyword id="KW-0521">NADP</keyword>
<organism>
    <name type="scientific">Desulfovibrio desulfuricans (strain ATCC 27774 / DSM 6949 / MB)</name>
    <dbReference type="NCBI Taxonomy" id="525146"/>
    <lineage>
        <taxon>Bacteria</taxon>
        <taxon>Pseudomonadati</taxon>
        <taxon>Thermodesulfobacteriota</taxon>
        <taxon>Desulfovibrionia</taxon>
        <taxon>Desulfovibrionales</taxon>
        <taxon>Desulfovibrionaceae</taxon>
        <taxon>Desulfovibrio</taxon>
    </lineage>
</organism>
<comment type="function">
    <text evidence="1">Catalyzes the anti-1,4-elimination of the C-3 phosphate and the C-6 proR hydrogen from 5-enolpyruvylshikimate-3-phosphate (EPSP) to yield chorismate, which is the branch point compound that serves as the starting substrate for the three terminal pathways of aromatic amino acid biosynthesis. This reaction introduces a second double bond into the aromatic ring system.</text>
</comment>
<comment type="catalytic activity">
    <reaction evidence="1">
        <text>5-O-(1-carboxyvinyl)-3-phosphoshikimate = chorismate + phosphate</text>
        <dbReference type="Rhea" id="RHEA:21020"/>
        <dbReference type="ChEBI" id="CHEBI:29748"/>
        <dbReference type="ChEBI" id="CHEBI:43474"/>
        <dbReference type="ChEBI" id="CHEBI:57701"/>
        <dbReference type="EC" id="4.2.3.5"/>
    </reaction>
</comment>
<comment type="cofactor">
    <cofactor evidence="1">
        <name>FMNH2</name>
        <dbReference type="ChEBI" id="CHEBI:57618"/>
    </cofactor>
    <text evidence="1">Reduced FMN (FMNH(2)).</text>
</comment>
<comment type="pathway">
    <text evidence="1">Metabolic intermediate biosynthesis; chorismate biosynthesis; chorismate from D-erythrose 4-phosphate and phosphoenolpyruvate: step 7/7.</text>
</comment>
<comment type="subunit">
    <text evidence="1">Homotetramer.</text>
</comment>
<comment type="similarity">
    <text evidence="1">Belongs to the chorismate synthase family.</text>
</comment>
<proteinExistence type="inferred from homology"/>
<dbReference type="EC" id="4.2.3.5" evidence="1"/>
<dbReference type="EMBL" id="CP001358">
    <property type="protein sequence ID" value="ACL50183.1"/>
    <property type="molecule type" value="Genomic_DNA"/>
</dbReference>
<dbReference type="SMR" id="B8J4Q3"/>
<dbReference type="STRING" id="525146.Ddes_2288"/>
<dbReference type="KEGG" id="dds:Ddes_2288"/>
<dbReference type="eggNOG" id="COG0082">
    <property type="taxonomic scope" value="Bacteria"/>
</dbReference>
<dbReference type="HOGENOM" id="CLU_034547_0_2_7"/>
<dbReference type="UniPathway" id="UPA00053">
    <property type="reaction ID" value="UER00090"/>
</dbReference>
<dbReference type="GO" id="GO:0005829">
    <property type="term" value="C:cytosol"/>
    <property type="evidence" value="ECO:0007669"/>
    <property type="project" value="TreeGrafter"/>
</dbReference>
<dbReference type="GO" id="GO:0004107">
    <property type="term" value="F:chorismate synthase activity"/>
    <property type="evidence" value="ECO:0007669"/>
    <property type="project" value="UniProtKB-UniRule"/>
</dbReference>
<dbReference type="GO" id="GO:0010181">
    <property type="term" value="F:FMN binding"/>
    <property type="evidence" value="ECO:0007669"/>
    <property type="project" value="TreeGrafter"/>
</dbReference>
<dbReference type="GO" id="GO:0008652">
    <property type="term" value="P:amino acid biosynthetic process"/>
    <property type="evidence" value="ECO:0007669"/>
    <property type="project" value="UniProtKB-KW"/>
</dbReference>
<dbReference type="GO" id="GO:0009073">
    <property type="term" value="P:aromatic amino acid family biosynthetic process"/>
    <property type="evidence" value="ECO:0007669"/>
    <property type="project" value="UniProtKB-KW"/>
</dbReference>
<dbReference type="GO" id="GO:0009423">
    <property type="term" value="P:chorismate biosynthetic process"/>
    <property type="evidence" value="ECO:0007669"/>
    <property type="project" value="UniProtKB-UniRule"/>
</dbReference>
<dbReference type="CDD" id="cd07304">
    <property type="entry name" value="Chorismate_synthase"/>
    <property type="match status" value="1"/>
</dbReference>
<dbReference type="Gene3D" id="3.60.150.10">
    <property type="entry name" value="Chorismate synthase AroC"/>
    <property type="match status" value="1"/>
</dbReference>
<dbReference type="HAMAP" id="MF_00300">
    <property type="entry name" value="Chorismate_synth"/>
    <property type="match status" value="1"/>
</dbReference>
<dbReference type="InterPro" id="IPR000453">
    <property type="entry name" value="Chorismate_synth"/>
</dbReference>
<dbReference type="InterPro" id="IPR035904">
    <property type="entry name" value="Chorismate_synth_AroC_sf"/>
</dbReference>
<dbReference type="InterPro" id="IPR020541">
    <property type="entry name" value="Chorismate_synthase_CS"/>
</dbReference>
<dbReference type="NCBIfam" id="TIGR00033">
    <property type="entry name" value="aroC"/>
    <property type="match status" value="1"/>
</dbReference>
<dbReference type="NCBIfam" id="NF003793">
    <property type="entry name" value="PRK05382.1"/>
    <property type="match status" value="1"/>
</dbReference>
<dbReference type="PANTHER" id="PTHR21085">
    <property type="entry name" value="CHORISMATE SYNTHASE"/>
    <property type="match status" value="1"/>
</dbReference>
<dbReference type="PANTHER" id="PTHR21085:SF0">
    <property type="entry name" value="CHORISMATE SYNTHASE"/>
    <property type="match status" value="1"/>
</dbReference>
<dbReference type="Pfam" id="PF01264">
    <property type="entry name" value="Chorismate_synt"/>
    <property type="match status" value="1"/>
</dbReference>
<dbReference type="PIRSF" id="PIRSF001456">
    <property type="entry name" value="Chorismate_synth"/>
    <property type="match status" value="1"/>
</dbReference>
<dbReference type="SUPFAM" id="SSF103263">
    <property type="entry name" value="Chorismate synthase, AroC"/>
    <property type="match status" value="1"/>
</dbReference>
<dbReference type="PROSITE" id="PS00787">
    <property type="entry name" value="CHORISMATE_SYNTHASE_1"/>
    <property type="match status" value="1"/>
</dbReference>
<dbReference type="PROSITE" id="PS00788">
    <property type="entry name" value="CHORISMATE_SYNTHASE_2"/>
    <property type="match status" value="1"/>
</dbReference>
<accession>B8J4Q3</accession>
<gene>
    <name evidence="1" type="primary">aroC</name>
    <name type="ordered locus">Ddes_2288</name>
</gene>
<evidence type="ECO:0000255" key="1">
    <source>
        <dbReference type="HAMAP-Rule" id="MF_00300"/>
    </source>
</evidence>
<feature type="chain" id="PRO_1000132766" description="Chorismate synthase">
    <location>
        <begin position="1"/>
        <end position="364"/>
    </location>
</feature>
<feature type="binding site" evidence="1">
    <location>
        <position position="48"/>
    </location>
    <ligand>
        <name>NADP(+)</name>
        <dbReference type="ChEBI" id="CHEBI:58349"/>
    </ligand>
</feature>
<feature type="binding site" evidence="1">
    <location>
        <begin position="126"/>
        <end position="128"/>
    </location>
    <ligand>
        <name>FMN</name>
        <dbReference type="ChEBI" id="CHEBI:58210"/>
    </ligand>
</feature>
<feature type="binding site" evidence="1">
    <location>
        <position position="288"/>
    </location>
    <ligand>
        <name>FMN</name>
        <dbReference type="ChEBI" id="CHEBI:58210"/>
    </ligand>
</feature>
<feature type="binding site" evidence="1">
    <location>
        <begin position="303"/>
        <end position="307"/>
    </location>
    <ligand>
        <name>FMN</name>
        <dbReference type="ChEBI" id="CHEBI:58210"/>
    </ligand>
</feature>
<feature type="binding site" evidence="1">
    <location>
        <position position="329"/>
    </location>
    <ligand>
        <name>FMN</name>
        <dbReference type="ChEBI" id="CHEBI:58210"/>
    </ligand>
</feature>
<reference key="1">
    <citation type="submission" date="2009-01" db="EMBL/GenBank/DDBJ databases">
        <title>Complete sequence of Desulfovibrio desulfuricans subsp. desulfuricans str. ATCC 27774.</title>
        <authorList>
            <consortium name="US DOE Joint Genome Institute"/>
            <person name="Lucas S."/>
            <person name="Copeland A."/>
            <person name="Lapidus A."/>
            <person name="Glavina del Rio T."/>
            <person name="Tice H."/>
            <person name="Bruce D."/>
            <person name="Goodwin L."/>
            <person name="Pitluck S."/>
            <person name="Sims D."/>
            <person name="Lu M."/>
            <person name="Kiss H."/>
            <person name="Meineke L."/>
            <person name="Brettin T."/>
            <person name="Detter J.C."/>
            <person name="Han C."/>
            <person name="Larimer F."/>
            <person name="Land M."/>
            <person name="Hauser L."/>
            <person name="Kyrpides N."/>
            <person name="Ovchinnikova G."/>
            <person name="Hazen T.C."/>
        </authorList>
    </citation>
    <scope>NUCLEOTIDE SEQUENCE [LARGE SCALE GENOMIC DNA]</scope>
    <source>
        <strain>ATCC 27774 / DSM 6949 / MB</strain>
    </source>
</reference>